<sequence length="548" mass="59405">MADGVDHIDIYADVGEEFNQEAEYGAHDQIELYEDVLSPSANNGDAPEDRDYMDNLAASVGDDVVKGSVPNIVYTYTGKRIALYIGNLTWWTTDEDLTDAVHSLGVNDILEIKFFENRANGQSKGFALICVSSESSSKKLMDLLPKREMHGQKPIVTPCNKQFLSQFEMQSRKTATQAGQMSGEGKAGPPGINARLPFPPGGRGRGRFPTSGPGGDRFPGPAGPGGPPPPFSAGMTPPRPPMCPPGPPGPPGPPPPGQPLPPPLPGPPNRGERPPPPVMFPGQPYGQPSIVTLPPGPPPPGYGPPPGPPPPQQGPPPPPGAFPPRPPGPPMALGPPPHLPGPPPGGPPPAPHVNPNFFPPPGNAGMTSSDSRGPPPSDPYGRPPPYERGDYGPPGRDMDVVRTPLSEAEFEEIMNRNRAISSSAISRAVSDASAGDYGSAIETLVTAISLIKQSKVSADDRCKVLISSLQDCLHGIESKSYGSGSRRRERSRERDHSRSREKSRRHKSRSRDRHDDYYRERSRERERHRDRERDRDRERDREREYRHR</sequence>
<proteinExistence type="evidence at transcript level"/>
<keyword id="KW-0963">Cytoplasm</keyword>
<keyword id="KW-0507">mRNA processing</keyword>
<keyword id="KW-0539">Nucleus</keyword>
<keyword id="KW-1185">Reference proteome</keyword>
<dbReference type="EMBL" id="BC077388">
    <property type="protein sequence ID" value="AAH77388.1"/>
    <property type="molecule type" value="mRNA"/>
</dbReference>
<dbReference type="RefSeq" id="NP_001086745.1">
    <property type="nucleotide sequence ID" value="NM_001093276.1"/>
</dbReference>
<dbReference type="SMR" id="Q6DDW4"/>
<dbReference type="DNASU" id="446580"/>
<dbReference type="GeneID" id="446580"/>
<dbReference type="KEGG" id="xla:446580"/>
<dbReference type="AGR" id="Xenbase:XB-GENE-961710"/>
<dbReference type="CTD" id="446580"/>
<dbReference type="Xenbase" id="XB-GENE-961710">
    <property type="gene designation" value="cpsf6.S"/>
</dbReference>
<dbReference type="OrthoDB" id="10065185at2759"/>
<dbReference type="Proteomes" id="UP000186698">
    <property type="component" value="Chromosome 3S"/>
</dbReference>
<dbReference type="Bgee" id="446580">
    <property type="expression patterns" value="Expressed in egg cell and 19 other cell types or tissues"/>
</dbReference>
<dbReference type="GO" id="GO:0005737">
    <property type="term" value="C:cytoplasm"/>
    <property type="evidence" value="ECO:0000250"/>
    <property type="project" value="UniProtKB"/>
</dbReference>
<dbReference type="GO" id="GO:0035061">
    <property type="term" value="C:interchromatin granule"/>
    <property type="evidence" value="ECO:0000250"/>
    <property type="project" value="UniProtKB"/>
</dbReference>
<dbReference type="GO" id="GO:0005847">
    <property type="term" value="C:mRNA cleavage and polyadenylation specificity factor complex"/>
    <property type="evidence" value="ECO:0000318"/>
    <property type="project" value="GO_Central"/>
</dbReference>
<dbReference type="GO" id="GO:0005849">
    <property type="term" value="C:mRNA cleavage factor complex"/>
    <property type="evidence" value="ECO:0000250"/>
    <property type="project" value="UniProtKB"/>
</dbReference>
<dbReference type="GO" id="GO:0016607">
    <property type="term" value="C:nuclear speck"/>
    <property type="evidence" value="ECO:0000250"/>
    <property type="project" value="UniProtKB"/>
</dbReference>
<dbReference type="GO" id="GO:0005654">
    <property type="term" value="C:nucleoplasm"/>
    <property type="evidence" value="ECO:0000250"/>
    <property type="project" value="UniProtKB"/>
</dbReference>
<dbReference type="GO" id="GO:0005634">
    <property type="term" value="C:nucleus"/>
    <property type="evidence" value="ECO:0000250"/>
    <property type="project" value="UniProtKB"/>
</dbReference>
<dbReference type="GO" id="GO:0042382">
    <property type="term" value="C:paraspeckles"/>
    <property type="evidence" value="ECO:0000250"/>
    <property type="project" value="UniProtKB"/>
</dbReference>
<dbReference type="GO" id="GO:0005726">
    <property type="term" value="C:perichromatin fibrils"/>
    <property type="evidence" value="ECO:0000250"/>
    <property type="project" value="UniProtKB"/>
</dbReference>
<dbReference type="GO" id="GO:0003729">
    <property type="term" value="F:mRNA binding"/>
    <property type="evidence" value="ECO:0000250"/>
    <property type="project" value="UniProtKB"/>
</dbReference>
<dbReference type="GO" id="GO:0180010">
    <property type="term" value="P:co-transcriptional mRNA 3'-end processing, cleavage and polyadenylation pathway"/>
    <property type="evidence" value="ECO:0000250"/>
    <property type="project" value="UniProtKB"/>
</dbReference>
<dbReference type="GO" id="GO:0110104">
    <property type="term" value="P:mRNA alternative polyadenylation"/>
    <property type="evidence" value="ECO:0000250"/>
    <property type="project" value="UniProtKB"/>
</dbReference>
<dbReference type="GO" id="GO:0046833">
    <property type="term" value="P:positive regulation of RNA export from nucleus"/>
    <property type="evidence" value="ECO:0000250"/>
    <property type="project" value="UniProtKB"/>
</dbReference>
<dbReference type="GO" id="GO:0051290">
    <property type="term" value="P:protein heterotetramerization"/>
    <property type="evidence" value="ECO:0000250"/>
    <property type="project" value="UniProtKB"/>
</dbReference>
<dbReference type="CDD" id="cd12643">
    <property type="entry name" value="RRM_CFIm68"/>
    <property type="match status" value="1"/>
</dbReference>
<dbReference type="FunFam" id="3.30.70.330:FF:000081">
    <property type="entry name" value="Cleavage and polyadenylation specificity factor subunit 6"/>
    <property type="match status" value="1"/>
</dbReference>
<dbReference type="Gene3D" id="3.30.70.330">
    <property type="match status" value="1"/>
</dbReference>
<dbReference type="InterPro" id="IPR034772">
    <property type="entry name" value="CPSF6/7"/>
</dbReference>
<dbReference type="InterPro" id="IPR034769">
    <property type="entry name" value="CPSF6_RRM"/>
</dbReference>
<dbReference type="InterPro" id="IPR012677">
    <property type="entry name" value="Nucleotide-bd_a/b_plait_sf"/>
</dbReference>
<dbReference type="InterPro" id="IPR035979">
    <property type="entry name" value="RBD_domain_sf"/>
</dbReference>
<dbReference type="InterPro" id="IPR000504">
    <property type="entry name" value="RRM_dom"/>
</dbReference>
<dbReference type="PANTHER" id="PTHR23204">
    <property type="entry name" value="CLEAVAGE AND POLYADENYLATION SPECIFIC FACTOR"/>
    <property type="match status" value="1"/>
</dbReference>
<dbReference type="Pfam" id="PF00076">
    <property type="entry name" value="RRM_1"/>
    <property type="match status" value="1"/>
</dbReference>
<dbReference type="PRINTS" id="PR01217">
    <property type="entry name" value="PRICHEXTENSN"/>
</dbReference>
<dbReference type="SMART" id="SM00360">
    <property type="entry name" value="RRM"/>
    <property type="match status" value="1"/>
</dbReference>
<dbReference type="SUPFAM" id="SSF54928">
    <property type="entry name" value="RNA-binding domain, RBD"/>
    <property type="match status" value="1"/>
</dbReference>
<dbReference type="PROSITE" id="PS50102">
    <property type="entry name" value="RRM"/>
    <property type="match status" value="1"/>
</dbReference>
<gene>
    <name evidence="1" type="primary">cpsf6</name>
</gene>
<organism>
    <name type="scientific">Xenopus laevis</name>
    <name type="common">African clawed frog</name>
    <dbReference type="NCBI Taxonomy" id="8355"/>
    <lineage>
        <taxon>Eukaryota</taxon>
        <taxon>Metazoa</taxon>
        <taxon>Chordata</taxon>
        <taxon>Craniata</taxon>
        <taxon>Vertebrata</taxon>
        <taxon>Euteleostomi</taxon>
        <taxon>Amphibia</taxon>
        <taxon>Batrachia</taxon>
        <taxon>Anura</taxon>
        <taxon>Pipoidea</taxon>
        <taxon>Pipidae</taxon>
        <taxon>Xenopodinae</taxon>
        <taxon>Xenopus</taxon>
        <taxon>Xenopus</taxon>
    </lineage>
</organism>
<reference key="1">
    <citation type="submission" date="2004-07" db="EMBL/GenBank/DDBJ databases">
        <authorList>
            <consortium name="NIH - Xenopus Gene Collection (XGC) project"/>
        </authorList>
    </citation>
    <scope>NUCLEOTIDE SEQUENCE [LARGE SCALE MRNA]</scope>
    <source>
        <tissue>Embryo</tissue>
    </source>
</reference>
<evidence type="ECO:0000250" key="1">
    <source>
        <dbReference type="UniProtKB" id="Q16630"/>
    </source>
</evidence>
<evidence type="ECO:0000255" key="2">
    <source>
        <dbReference type="PROSITE-ProRule" id="PRU00176"/>
    </source>
</evidence>
<evidence type="ECO:0000256" key="3">
    <source>
        <dbReference type="SAM" id="MobiDB-lite"/>
    </source>
</evidence>
<evidence type="ECO:0000305" key="4"/>
<comment type="function">
    <text evidence="1">Component of the cleavage factor Im (CFIm) complex that functions as an activator of the pre-mRNA 3'-end cleavage and polyadenylation processing required for the maturation of pre-mRNA into functional mRNAs. CFIm contributes to the recruitment of multiprotein complexes on specific sequences on the pre-mRNA 3'-end, so called cleavage and polyadenylation signals (pA signals). Most pre-mRNAs contain multiple pA signals, resulting in alternative cleavage and polyadenylation (APA) producing mRNAs with variable 3'-end formation. The CFIm complex acts as a key regulator of cleavage and polyadenylation site choice during APA through its binding to 5'-UGUA-3' elements localized in the 3'-untranslated region (UTR) for a huge number of pre-mRNAs. Plays a role in mRNA export.</text>
</comment>
<comment type="subunit">
    <text evidence="1">Component of the cleavage factor Im (CFIm) complex.</text>
</comment>
<comment type="subcellular location">
    <subcellularLocation>
        <location evidence="1">Nucleus</location>
    </subcellularLocation>
    <subcellularLocation>
        <location evidence="1">Nucleus</location>
        <location evidence="1">Nucleoplasm</location>
    </subcellularLocation>
    <subcellularLocation>
        <location evidence="1">Nucleus speckle</location>
    </subcellularLocation>
    <subcellularLocation>
        <location evidence="1">Cytoplasm</location>
    </subcellularLocation>
    <text evidence="1">Shuttles between the nucleus and the cytoplasm.</text>
</comment>
<comment type="similarity">
    <text evidence="4">Belongs to the RRM CPSF6/7 family.</text>
</comment>
<feature type="chain" id="PRO_0000081526" description="Cleavage and polyadenylation specificity factor subunit 6">
    <location>
        <begin position="1"/>
        <end position="548"/>
    </location>
</feature>
<feature type="domain" description="RRM" evidence="2">
    <location>
        <begin position="81"/>
        <end position="161"/>
    </location>
</feature>
<feature type="region of interest" description="Disordered" evidence="3">
    <location>
        <begin position="169"/>
        <end position="401"/>
    </location>
</feature>
<feature type="region of interest" description="Disordered" evidence="3">
    <location>
        <begin position="473"/>
        <end position="548"/>
    </location>
</feature>
<feature type="compositionally biased region" description="Polar residues" evidence="3">
    <location>
        <begin position="169"/>
        <end position="180"/>
    </location>
</feature>
<feature type="compositionally biased region" description="Pro residues" evidence="3">
    <location>
        <begin position="221"/>
        <end position="279"/>
    </location>
</feature>
<feature type="compositionally biased region" description="Pro residues" evidence="3">
    <location>
        <begin position="294"/>
        <end position="362"/>
    </location>
</feature>
<feature type="compositionally biased region" description="Pro residues" evidence="3">
    <location>
        <begin position="373"/>
        <end position="384"/>
    </location>
</feature>
<feature type="compositionally biased region" description="Basic and acidic residues" evidence="3">
    <location>
        <begin position="385"/>
        <end position="400"/>
    </location>
</feature>
<feature type="compositionally biased region" description="Basic and acidic residues" evidence="3">
    <location>
        <begin position="490"/>
        <end position="500"/>
    </location>
</feature>
<feature type="compositionally biased region" description="Basic residues" evidence="3">
    <location>
        <begin position="501"/>
        <end position="511"/>
    </location>
</feature>
<feature type="compositionally biased region" description="Basic and acidic residues" evidence="3">
    <location>
        <begin position="512"/>
        <end position="548"/>
    </location>
</feature>
<name>CPSF6_XENLA</name>
<accession>Q6DDW4</accession>
<protein>
    <recommendedName>
        <fullName evidence="1">Cleavage and polyadenylation specificity factor subunit 6</fullName>
    </recommendedName>
</protein>